<feature type="signal peptide" evidence="2">
    <location>
        <begin position="1"/>
        <end position="36"/>
    </location>
</feature>
<feature type="chain" id="PRO_0000359576" description="Serine protease SplE">
    <location>
        <begin position="37"/>
        <end position="238"/>
    </location>
</feature>
<feature type="active site" description="Charge relay system" evidence="1">
    <location>
        <position position="75"/>
    </location>
</feature>
<feature type="active site" description="Charge relay system" evidence="1">
    <location>
        <position position="113"/>
    </location>
</feature>
<feature type="active site" description="Charge relay system" evidence="1">
    <location>
        <position position="191"/>
    </location>
</feature>
<protein>
    <recommendedName>
        <fullName>Serine protease SplE</fullName>
        <ecNumber>3.4.21.-</ecNumber>
    </recommendedName>
</protein>
<accession>A6QHZ2</accession>
<organism>
    <name type="scientific">Staphylococcus aureus (strain Newman)</name>
    <dbReference type="NCBI Taxonomy" id="426430"/>
    <lineage>
        <taxon>Bacteria</taxon>
        <taxon>Bacillati</taxon>
        <taxon>Bacillota</taxon>
        <taxon>Bacilli</taxon>
        <taxon>Bacillales</taxon>
        <taxon>Staphylococcaceae</taxon>
        <taxon>Staphylococcus</taxon>
    </lineage>
</organism>
<name>SPLE_STAAE</name>
<comment type="subcellular location">
    <subcellularLocation>
        <location evidence="1">Secreted</location>
    </subcellularLocation>
</comment>
<comment type="similarity">
    <text evidence="3">Belongs to the peptidase S1B family.</text>
</comment>
<reference key="1">
    <citation type="journal article" date="2008" name="J. Bacteriol.">
        <title>Genome sequence of Staphylococcus aureus strain Newman and comparative analysis of staphylococcal genomes: polymorphism and evolution of two major pathogenicity islands.</title>
        <authorList>
            <person name="Baba T."/>
            <person name="Bae T."/>
            <person name="Schneewind O."/>
            <person name="Takeuchi F."/>
            <person name="Hiramatsu K."/>
        </authorList>
    </citation>
    <scope>NUCLEOTIDE SEQUENCE [LARGE SCALE GENOMIC DNA]</scope>
    <source>
        <strain>Newman</strain>
    </source>
</reference>
<sequence>MNKNIIIKSIAALTILTSVTGVGTTVVEGIQQTAKAEHNVKLIKNTNVAPYNGVVSIGSGTGFIVGKNTIVTNKHVVAGMEIGAHIIAHPNGEYNNGGFYKVKKIVRYSGQEDIAILHVEDKAVHPKNRNFKDYTGILKIASEAKENERISIVGYPEPYINKFQMYESTGKVLSVKGNMIITDAFVEPGNSGSAVFNSKYEVVGVHFGGNGPGNKSTKGYGVYFSPEIKKFIADNTDK</sequence>
<gene>
    <name type="primary">splE</name>
    <name type="ordered locus">NWMN_1702</name>
</gene>
<keyword id="KW-0378">Hydrolase</keyword>
<keyword id="KW-0645">Protease</keyword>
<keyword id="KW-0964">Secreted</keyword>
<keyword id="KW-0720">Serine protease</keyword>
<keyword id="KW-0732">Signal</keyword>
<proteinExistence type="inferred from homology"/>
<dbReference type="EC" id="3.4.21.-"/>
<dbReference type="EMBL" id="AP009351">
    <property type="protein sequence ID" value="BAF67974.1"/>
    <property type="molecule type" value="Genomic_DNA"/>
</dbReference>
<dbReference type="RefSeq" id="WP_001038759.1">
    <property type="nucleotide sequence ID" value="NZ_JBBIAE010000013.1"/>
</dbReference>
<dbReference type="SMR" id="A6QHZ2"/>
<dbReference type="MEROPS" id="S01.312"/>
<dbReference type="KEGG" id="sae:NWMN_1702"/>
<dbReference type="HOGENOM" id="CLU_073589_2_0_9"/>
<dbReference type="Proteomes" id="UP000006386">
    <property type="component" value="Chromosome"/>
</dbReference>
<dbReference type="GO" id="GO:0005576">
    <property type="term" value="C:extracellular region"/>
    <property type="evidence" value="ECO:0007669"/>
    <property type="project" value="UniProtKB-SubCell"/>
</dbReference>
<dbReference type="GO" id="GO:0004252">
    <property type="term" value="F:serine-type endopeptidase activity"/>
    <property type="evidence" value="ECO:0007669"/>
    <property type="project" value="InterPro"/>
</dbReference>
<dbReference type="GO" id="GO:0006508">
    <property type="term" value="P:proteolysis"/>
    <property type="evidence" value="ECO:0007669"/>
    <property type="project" value="UniProtKB-KW"/>
</dbReference>
<dbReference type="Gene3D" id="2.40.10.10">
    <property type="entry name" value="Trypsin-like serine proteases"/>
    <property type="match status" value="2"/>
</dbReference>
<dbReference type="InterPro" id="IPR009003">
    <property type="entry name" value="Peptidase_S1_PA"/>
</dbReference>
<dbReference type="InterPro" id="IPR043504">
    <property type="entry name" value="Peptidase_S1_PA_chymotrypsin"/>
</dbReference>
<dbReference type="InterPro" id="IPR008256">
    <property type="entry name" value="Peptidase_S1B"/>
</dbReference>
<dbReference type="InterPro" id="IPR008353">
    <property type="entry name" value="Peptidase_S1B_tx"/>
</dbReference>
<dbReference type="InterPro" id="IPR001254">
    <property type="entry name" value="Trypsin_dom"/>
</dbReference>
<dbReference type="InterPro" id="IPR028301">
    <property type="entry name" value="V8_his_AS"/>
</dbReference>
<dbReference type="PANTHER" id="PTHR43019:SF23">
    <property type="entry name" value="PROTEASE DO-LIKE 5, CHLOROPLASTIC"/>
    <property type="match status" value="1"/>
</dbReference>
<dbReference type="PANTHER" id="PTHR43019">
    <property type="entry name" value="SERINE ENDOPROTEASE DEGS"/>
    <property type="match status" value="1"/>
</dbReference>
<dbReference type="Pfam" id="PF00089">
    <property type="entry name" value="Trypsin"/>
    <property type="match status" value="1"/>
</dbReference>
<dbReference type="PRINTS" id="PR01774">
    <property type="entry name" value="EXFOLTOXIN"/>
</dbReference>
<dbReference type="PRINTS" id="PR00839">
    <property type="entry name" value="V8PROTEASE"/>
</dbReference>
<dbReference type="SUPFAM" id="SSF50494">
    <property type="entry name" value="Trypsin-like serine proteases"/>
    <property type="match status" value="1"/>
</dbReference>
<dbReference type="PROSITE" id="PS00672">
    <property type="entry name" value="V8_HIS"/>
    <property type="match status" value="1"/>
</dbReference>
<evidence type="ECO:0000250" key="1"/>
<evidence type="ECO:0000255" key="2"/>
<evidence type="ECO:0000305" key="3"/>